<accession>A5IZH6</accession>
<protein>
    <recommendedName>
        <fullName evidence="1">Peptide chain release factor 1</fullName>
        <shortName evidence="1">RF-1</shortName>
    </recommendedName>
</protein>
<dbReference type="EMBL" id="CU179680">
    <property type="protein sequence ID" value="CAL59435.1"/>
    <property type="molecule type" value="Genomic_DNA"/>
</dbReference>
<dbReference type="RefSeq" id="WP_004024169.1">
    <property type="nucleotide sequence ID" value="NC_009497.1"/>
</dbReference>
<dbReference type="SMR" id="A5IZH6"/>
<dbReference type="STRING" id="347257.MAG7350"/>
<dbReference type="GeneID" id="93358462"/>
<dbReference type="KEGG" id="maa:MAG7350"/>
<dbReference type="HOGENOM" id="CLU_036856_0_1_14"/>
<dbReference type="Proteomes" id="UP000007065">
    <property type="component" value="Chromosome"/>
</dbReference>
<dbReference type="GO" id="GO:0005737">
    <property type="term" value="C:cytoplasm"/>
    <property type="evidence" value="ECO:0007669"/>
    <property type="project" value="UniProtKB-SubCell"/>
</dbReference>
<dbReference type="GO" id="GO:0016149">
    <property type="term" value="F:translation release factor activity, codon specific"/>
    <property type="evidence" value="ECO:0007669"/>
    <property type="project" value="UniProtKB-UniRule"/>
</dbReference>
<dbReference type="FunFam" id="3.30.160.20:FF:000004">
    <property type="entry name" value="Peptide chain release factor 1"/>
    <property type="match status" value="1"/>
</dbReference>
<dbReference type="FunFam" id="3.30.70.1660:FF:000002">
    <property type="entry name" value="Peptide chain release factor 1"/>
    <property type="match status" value="1"/>
</dbReference>
<dbReference type="Gene3D" id="3.30.160.20">
    <property type="match status" value="1"/>
</dbReference>
<dbReference type="Gene3D" id="3.30.70.1660">
    <property type="match status" value="1"/>
</dbReference>
<dbReference type="Gene3D" id="6.10.140.1950">
    <property type="match status" value="1"/>
</dbReference>
<dbReference type="HAMAP" id="MF_00093">
    <property type="entry name" value="Rel_fac_1"/>
    <property type="match status" value="1"/>
</dbReference>
<dbReference type="InterPro" id="IPR005139">
    <property type="entry name" value="PCRF"/>
</dbReference>
<dbReference type="InterPro" id="IPR000352">
    <property type="entry name" value="Pep_chain_release_fac_I"/>
</dbReference>
<dbReference type="InterPro" id="IPR045853">
    <property type="entry name" value="Pep_chain_release_fac_I_sf"/>
</dbReference>
<dbReference type="InterPro" id="IPR050057">
    <property type="entry name" value="Prokaryotic/Mito_RF"/>
</dbReference>
<dbReference type="InterPro" id="IPR004373">
    <property type="entry name" value="RF-1"/>
</dbReference>
<dbReference type="NCBIfam" id="TIGR00019">
    <property type="entry name" value="prfA"/>
    <property type="match status" value="1"/>
</dbReference>
<dbReference type="NCBIfam" id="NF001859">
    <property type="entry name" value="PRK00591.1"/>
    <property type="match status" value="1"/>
</dbReference>
<dbReference type="PANTHER" id="PTHR43804">
    <property type="entry name" value="LD18447P"/>
    <property type="match status" value="1"/>
</dbReference>
<dbReference type="PANTHER" id="PTHR43804:SF7">
    <property type="entry name" value="LD18447P"/>
    <property type="match status" value="1"/>
</dbReference>
<dbReference type="Pfam" id="PF03462">
    <property type="entry name" value="PCRF"/>
    <property type="match status" value="1"/>
</dbReference>
<dbReference type="Pfam" id="PF00472">
    <property type="entry name" value="RF-1"/>
    <property type="match status" value="1"/>
</dbReference>
<dbReference type="SMART" id="SM00937">
    <property type="entry name" value="PCRF"/>
    <property type="match status" value="1"/>
</dbReference>
<dbReference type="SUPFAM" id="SSF75620">
    <property type="entry name" value="Release factor"/>
    <property type="match status" value="1"/>
</dbReference>
<dbReference type="PROSITE" id="PS00745">
    <property type="entry name" value="RF_PROK_I"/>
    <property type="match status" value="1"/>
</dbReference>
<organism>
    <name type="scientific">Mycoplasmopsis agalactiae (strain NCTC 10123 / CIP 59.7 / PG2)</name>
    <name type="common">Mycoplasma agalactiae</name>
    <dbReference type="NCBI Taxonomy" id="347257"/>
    <lineage>
        <taxon>Bacteria</taxon>
        <taxon>Bacillati</taxon>
        <taxon>Mycoplasmatota</taxon>
        <taxon>Mycoplasmoidales</taxon>
        <taxon>Metamycoplasmataceae</taxon>
        <taxon>Mycoplasmopsis</taxon>
    </lineage>
</organism>
<comment type="function">
    <text evidence="1">Peptide chain release factor 1 directs the termination of translation in response to the peptide chain termination codons UAG and UAA.</text>
</comment>
<comment type="subcellular location">
    <subcellularLocation>
        <location evidence="1">Cytoplasm</location>
    </subcellularLocation>
</comment>
<comment type="PTM">
    <text evidence="1">Methylated by PrmC. Methylation increases the termination efficiency of RF1.</text>
</comment>
<comment type="similarity">
    <text evidence="1">Belongs to the prokaryotic/mitochondrial release factor family.</text>
</comment>
<name>RF1_MYCAP</name>
<gene>
    <name evidence="1" type="primary">prfA</name>
    <name type="ordered locus">MAG7350</name>
</gene>
<proteinExistence type="inferred from homology"/>
<sequence>MEKTMFKSLSEIKQSYLELLKKIDDPEVISNIKEYSAINKEIAKIREISEKFITYENILKDVEQAKIMLESKNEEEVEFAKMIIDENSLKLDELEEKLKILILPQDENDDKNIIVEIRGAAGGDEANIFAGDLFRMYSKFADELGFRLKILSTNSASAGGFSQIVFSIKGEKAYSKFKFESGVHRVQRVPVTESQGRIHTSTTTVTVMPEIDDSVEIEIKPSDLKIDVFRSSGAGGQSVNTTDSAVRITHLPTNIVVTSQDERSQIANRETALTILKSKLYDLEMQKKAEEESGYRKLAGHGDRSEKIRTYNYPQDRVTDHRISFSTSLKPIMEGKLTPIIDALLAEEQNQKIKESGF</sequence>
<reference key="1">
    <citation type="journal article" date="2007" name="PLoS Genet.">
        <title>Being pathogenic, plastic, and sexual while living with a nearly minimal bacterial genome.</title>
        <authorList>
            <person name="Sirand-Pugnet P."/>
            <person name="Lartigue C."/>
            <person name="Marenda M."/>
            <person name="Jacob D."/>
            <person name="Barre A."/>
            <person name="Barbe V."/>
            <person name="Schenowitz C."/>
            <person name="Mangenot S."/>
            <person name="Couloux A."/>
            <person name="Segurens B."/>
            <person name="de Daruvar A."/>
            <person name="Blanchard A."/>
            <person name="Citti C."/>
        </authorList>
    </citation>
    <scope>NUCLEOTIDE SEQUENCE [LARGE SCALE GENOMIC DNA]</scope>
    <source>
        <strain>NCTC 10123 / CIP 59.7 / PG2</strain>
    </source>
</reference>
<keyword id="KW-0963">Cytoplasm</keyword>
<keyword id="KW-0488">Methylation</keyword>
<keyword id="KW-0648">Protein biosynthesis</keyword>
<keyword id="KW-1185">Reference proteome</keyword>
<evidence type="ECO:0000255" key="1">
    <source>
        <dbReference type="HAMAP-Rule" id="MF_00093"/>
    </source>
</evidence>
<evidence type="ECO:0000256" key="2">
    <source>
        <dbReference type="SAM" id="MobiDB-lite"/>
    </source>
</evidence>
<feature type="chain" id="PRO_1000093476" description="Peptide chain release factor 1">
    <location>
        <begin position="1"/>
        <end position="358"/>
    </location>
</feature>
<feature type="region of interest" description="Disordered" evidence="2">
    <location>
        <begin position="291"/>
        <end position="313"/>
    </location>
</feature>
<feature type="compositionally biased region" description="Basic and acidic residues" evidence="2">
    <location>
        <begin position="291"/>
        <end position="309"/>
    </location>
</feature>
<feature type="modified residue" description="N5-methylglutamine" evidence="1">
    <location>
        <position position="237"/>
    </location>
</feature>